<organism>
    <name type="scientific">Anaeromyxobacter sp. (strain Fw109-5)</name>
    <dbReference type="NCBI Taxonomy" id="404589"/>
    <lineage>
        <taxon>Bacteria</taxon>
        <taxon>Pseudomonadati</taxon>
        <taxon>Myxococcota</taxon>
        <taxon>Myxococcia</taxon>
        <taxon>Myxococcales</taxon>
        <taxon>Cystobacterineae</taxon>
        <taxon>Anaeromyxobacteraceae</taxon>
        <taxon>Anaeromyxobacter</taxon>
    </lineage>
</organism>
<protein>
    <recommendedName>
        <fullName evidence="1">Type III pantothenate kinase</fullName>
        <ecNumber evidence="1">2.7.1.33</ecNumber>
    </recommendedName>
    <alternativeName>
        <fullName evidence="1">PanK-III</fullName>
    </alternativeName>
    <alternativeName>
        <fullName evidence="1">Pantothenic acid kinase</fullName>
    </alternativeName>
</protein>
<keyword id="KW-0067">ATP-binding</keyword>
<keyword id="KW-0173">Coenzyme A biosynthesis</keyword>
<keyword id="KW-0963">Cytoplasm</keyword>
<keyword id="KW-0418">Kinase</keyword>
<keyword id="KW-0479">Metal-binding</keyword>
<keyword id="KW-0547">Nucleotide-binding</keyword>
<keyword id="KW-0630">Potassium</keyword>
<keyword id="KW-1185">Reference proteome</keyword>
<keyword id="KW-0808">Transferase</keyword>
<name>COAX_ANADF</name>
<proteinExistence type="inferred from homology"/>
<comment type="function">
    <text evidence="1">Catalyzes the phosphorylation of pantothenate (Pan), the first step in CoA biosynthesis.</text>
</comment>
<comment type="catalytic activity">
    <reaction evidence="1">
        <text>(R)-pantothenate + ATP = (R)-4'-phosphopantothenate + ADP + H(+)</text>
        <dbReference type="Rhea" id="RHEA:16373"/>
        <dbReference type="ChEBI" id="CHEBI:10986"/>
        <dbReference type="ChEBI" id="CHEBI:15378"/>
        <dbReference type="ChEBI" id="CHEBI:29032"/>
        <dbReference type="ChEBI" id="CHEBI:30616"/>
        <dbReference type="ChEBI" id="CHEBI:456216"/>
        <dbReference type="EC" id="2.7.1.33"/>
    </reaction>
</comment>
<comment type="cofactor">
    <cofactor evidence="1">
        <name>NH4(+)</name>
        <dbReference type="ChEBI" id="CHEBI:28938"/>
    </cofactor>
    <cofactor evidence="1">
        <name>K(+)</name>
        <dbReference type="ChEBI" id="CHEBI:29103"/>
    </cofactor>
    <text evidence="1">A monovalent cation. Ammonium or potassium.</text>
</comment>
<comment type="pathway">
    <text evidence="1">Cofactor biosynthesis; coenzyme A biosynthesis; CoA from (R)-pantothenate: step 1/5.</text>
</comment>
<comment type="subunit">
    <text evidence="1">Homodimer.</text>
</comment>
<comment type="subcellular location">
    <subcellularLocation>
        <location evidence="1">Cytoplasm</location>
    </subcellularLocation>
</comment>
<comment type="similarity">
    <text evidence="1">Belongs to the type III pantothenate kinase family.</text>
</comment>
<evidence type="ECO:0000255" key="1">
    <source>
        <dbReference type="HAMAP-Rule" id="MF_01274"/>
    </source>
</evidence>
<reference key="1">
    <citation type="journal article" date="2015" name="Genome Announc.">
        <title>Complete genome sequence of Anaeromyxobacter sp. Fw109-5, an anaerobic, metal-reducing bacterium isolated from a contaminated subsurface environment.</title>
        <authorList>
            <person name="Hwang C."/>
            <person name="Copeland A."/>
            <person name="Lucas S."/>
            <person name="Lapidus A."/>
            <person name="Barry K."/>
            <person name="Glavina Del Rio T."/>
            <person name="Dalin E."/>
            <person name="Tice H."/>
            <person name="Pitluck S."/>
            <person name="Sims D."/>
            <person name="Brettin T."/>
            <person name="Bruce D.C."/>
            <person name="Detter J.C."/>
            <person name="Han C.S."/>
            <person name="Schmutz J."/>
            <person name="Larimer F.W."/>
            <person name="Land M.L."/>
            <person name="Hauser L.J."/>
            <person name="Kyrpides N."/>
            <person name="Lykidis A."/>
            <person name="Richardson P."/>
            <person name="Belieav A."/>
            <person name="Sanford R.A."/>
            <person name="Loeffler F.E."/>
            <person name="Fields M.W."/>
        </authorList>
    </citation>
    <scope>NUCLEOTIDE SEQUENCE [LARGE SCALE GENOMIC DNA]</scope>
    <source>
        <strain>Fw109-5</strain>
    </source>
</reference>
<dbReference type="EC" id="2.7.1.33" evidence="1"/>
<dbReference type="EMBL" id="CP000769">
    <property type="protein sequence ID" value="ABS25687.1"/>
    <property type="molecule type" value="Genomic_DNA"/>
</dbReference>
<dbReference type="RefSeq" id="WP_011985793.1">
    <property type="nucleotide sequence ID" value="NC_009675.1"/>
</dbReference>
<dbReference type="SMR" id="A7HAE1"/>
<dbReference type="STRING" id="404589.Anae109_1480"/>
<dbReference type="KEGG" id="afw:Anae109_1480"/>
<dbReference type="eggNOG" id="COG1521">
    <property type="taxonomic scope" value="Bacteria"/>
</dbReference>
<dbReference type="HOGENOM" id="CLU_066627_1_0_7"/>
<dbReference type="OrthoDB" id="9804707at2"/>
<dbReference type="UniPathway" id="UPA00241">
    <property type="reaction ID" value="UER00352"/>
</dbReference>
<dbReference type="Proteomes" id="UP000006382">
    <property type="component" value="Chromosome"/>
</dbReference>
<dbReference type="GO" id="GO:0005737">
    <property type="term" value="C:cytoplasm"/>
    <property type="evidence" value="ECO:0007669"/>
    <property type="project" value="UniProtKB-SubCell"/>
</dbReference>
<dbReference type="GO" id="GO:0005524">
    <property type="term" value="F:ATP binding"/>
    <property type="evidence" value="ECO:0007669"/>
    <property type="project" value="UniProtKB-UniRule"/>
</dbReference>
<dbReference type="GO" id="GO:0046872">
    <property type="term" value="F:metal ion binding"/>
    <property type="evidence" value="ECO:0007669"/>
    <property type="project" value="UniProtKB-KW"/>
</dbReference>
<dbReference type="GO" id="GO:0004594">
    <property type="term" value="F:pantothenate kinase activity"/>
    <property type="evidence" value="ECO:0007669"/>
    <property type="project" value="UniProtKB-UniRule"/>
</dbReference>
<dbReference type="GO" id="GO:0015937">
    <property type="term" value="P:coenzyme A biosynthetic process"/>
    <property type="evidence" value="ECO:0007669"/>
    <property type="project" value="UniProtKB-UniRule"/>
</dbReference>
<dbReference type="CDD" id="cd24015">
    <property type="entry name" value="ASKHA_NBD_PanK-III"/>
    <property type="match status" value="1"/>
</dbReference>
<dbReference type="Gene3D" id="3.30.420.40">
    <property type="match status" value="2"/>
</dbReference>
<dbReference type="HAMAP" id="MF_01274">
    <property type="entry name" value="Pantothen_kinase_3"/>
    <property type="match status" value="1"/>
</dbReference>
<dbReference type="InterPro" id="IPR043129">
    <property type="entry name" value="ATPase_NBD"/>
</dbReference>
<dbReference type="InterPro" id="IPR004619">
    <property type="entry name" value="Type_III_PanK"/>
</dbReference>
<dbReference type="NCBIfam" id="TIGR00671">
    <property type="entry name" value="baf"/>
    <property type="match status" value="1"/>
</dbReference>
<dbReference type="NCBIfam" id="NF009848">
    <property type="entry name" value="PRK13318.1-6"/>
    <property type="match status" value="1"/>
</dbReference>
<dbReference type="NCBIfam" id="NF009855">
    <property type="entry name" value="PRK13321.1"/>
    <property type="match status" value="1"/>
</dbReference>
<dbReference type="PANTHER" id="PTHR34265">
    <property type="entry name" value="TYPE III PANTOTHENATE KINASE"/>
    <property type="match status" value="1"/>
</dbReference>
<dbReference type="PANTHER" id="PTHR34265:SF1">
    <property type="entry name" value="TYPE III PANTOTHENATE KINASE"/>
    <property type="match status" value="1"/>
</dbReference>
<dbReference type="Pfam" id="PF03309">
    <property type="entry name" value="Pan_kinase"/>
    <property type="match status" value="1"/>
</dbReference>
<dbReference type="SUPFAM" id="SSF53067">
    <property type="entry name" value="Actin-like ATPase domain"/>
    <property type="match status" value="2"/>
</dbReference>
<sequence length="254" mass="27338">MLLAIDVGNTNTVLGAYEGPSLRQHWRIETSHTRTYDEYGILVRQLFQVAGLDPAAVTAVAVSSVVPPLAFTLEQMSLRYFKVKPLFVGPGVKTGMSILYENPREVGADRVVNAVAAFERWRCGLIVVDFGTATTFDAVSPKGEYLGGAICPGIAISMDALFRHASKLPRVEFQRPPHVIGKNTVASIQSGLVYGYVGLVDGICARMADELGFAPKVVATGGLAALIAGVSKTVSEVDEHLTLDGLRLLHERNR</sequence>
<gene>
    <name evidence="1" type="primary">coaX</name>
    <name type="ordered locus">Anae109_1480</name>
</gene>
<accession>A7HAE1</accession>
<feature type="chain" id="PRO_1000054356" description="Type III pantothenate kinase">
    <location>
        <begin position="1"/>
        <end position="254"/>
    </location>
</feature>
<feature type="active site" description="Proton acceptor" evidence="1">
    <location>
        <position position="109"/>
    </location>
</feature>
<feature type="binding site" evidence="1">
    <location>
        <begin position="6"/>
        <end position="13"/>
    </location>
    <ligand>
        <name>ATP</name>
        <dbReference type="ChEBI" id="CHEBI:30616"/>
    </ligand>
</feature>
<feature type="binding site" evidence="1">
    <location>
        <position position="100"/>
    </location>
    <ligand>
        <name>substrate</name>
    </ligand>
</feature>
<feature type="binding site" evidence="1">
    <location>
        <begin position="107"/>
        <end position="110"/>
    </location>
    <ligand>
        <name>substrate</name>
    </ligand>
</feature>
<feature type="binding site" evidence="1">
    <location>
        <position position="129"/>
    </location>
    <ligand>
        <name>K(+)</name>
        <dbReference type="ChEBI" id="CHEBI:29103"/>
    </ligand>
</feature>
<feature type="binding site" evidence="1">
    <location>
        <position position="132"/>
    </location>
    <ligand>
        <name>ATP</name>
        <dbReference type="ChEBI" id="CHEBI:30616"/>
    </ligand>
</feature>
<feature type="binding site" evidence="1">
    <location>
        <position position="184"/>
    </location>
    <ligand>
        <name>substrate</name>
    </ligand>
</feature>